<keyword id="KW-0067">ATP-binding</keyword>
<keyword id="KW-0315">Glutamine amidotransferase</keyword>
<keyword id="KW-0332">GMP biosynthesis</keyword>
<keyword id="KW-0436">Ligase</keyword>
<keyword id="KW-0547">Nucleotide-binding</keyword>
<keyword id="KW-0658">Purine biosynthesis</keyword>
<organism>
    <name type="scientific">Dehalococcoides mccartyi (strain CBDB1)</name>
    <dbReference type="NCBI Taxonomy" id="255470"/>
    <lineage>
        <taxon>Bacteria</taxon>
        <taxon>Bacillati</taxon>
        <taxon>Chloroflexota</taxon>
        <taxon>Dehalococcoidia</taxon>
        <taxon>Dehalococcoidales</taxon>
        <taxon>Dehalococcoidaceae</taxon>
        <taxon>Dehalococcoides</taxon>
    </lineage>
</organism>
<dbReference type="EC" id="6.3.5.2" evidence="1"/>
<dbReference type="EMBL" id="AJ965256">
    <property type="protein sequence ID" value="CAI82963.1"/>
    <property type="molecule type" value="Genomic_DNA"/>
</dbReference>
<dbReference type="SMR" id="Q3ZXH7"/>
<dbReference type="MEROPS" id="C26.957"/>
<dbReference type="KEGG" id="deh:cbdbA817"/>
<dbReference type="HOGENOM" id="CLU_014340_0_5_0"/>
<dbReference type="UniPathway" id="UPA00189">
    <property type="reaction ID" value="UER00296"/>
</dbReference>
<dbReference type="Proteomes" id="UP000000433">
    <property type="component" value="Chromosome"/>
</dbReference>
<dbReference type="GO" id="GO:0005829">
    <property type="term" value="C:cytosol"/>
    <property type="evidence" value="ECO:0007669"/>
    <property type="project" value="TreeGrafter"/>
</dbReference>
<dbReference type="GO" id="GO:0005524">
    <property type="term" value="F:ATP binding"/>
    <property type="evidence" value="ECO:0007669"/>
    <property type="project" value="UniProtKB-UniRule"/>
</dbReference>
<dbReference type="GO" id="GO:0003921">
    <property type="term" value="F:GMP synthase activity"/>
    <property type="evidence" value="ECO:0007669"/>
    <property type="project" value="InterPro"/>
</dbReference>
<dbReference type="CDD" id="cd01742">
    <property type="entry name" value="GATase1_GMP_Synthase"/>
    <property type="match status" value="1"/>
</dbReference>
<dbReference type="CDD" id="cd01997">
    <property type="entry name" value="GMP_synthase_C"/>
    <property type="match status" value="1"/>
</dbReference>
<dbReference type="FunFam" id="3.30.300.10:FF:000002">
    <property type="entry name" value="GMP synthase [glutamine-hydrolyzing]"/>
    <property type="match status" value="1"/>
</dbReference>
<dbReference type="FunFam" id="3.40.50.620:FF:000001">
    <property type="entry name" value="GMP synthase [glutamine-hydrolyzing]"/>
    <property type="match status" value="1"/>
</dbReference>
<dbReference type="FunFam" id="3.40.50.880:FF:000001">
    <property type="entry name" value="GMP synthase [glutamine-hydrolyzing]"/>
    <property type="match status" value="1"/>
</dbReference>
<dbReference type="Gene3D" id="3.30.300.10">
    <property type="match status" value="1"/>
</dbReference>
<dbReference type="Gene3D" id="3.40.50.880">
    <property type="match status" value="1"/>
</dbReference>
<dbReference type="Gene3D" id="3.40.50.620">
    <property type="entry name" value="HUPs"/>
    <property type="match status" value="1"/>
</dbReference>
<dbReference type="HAMAP" id="MF_00344">
    <property type="entry name" value="GMP_synthase"/>
    <property type="match status" value="1"/>
</dbReference>
<dbReference type="InterPro" id="IPR029062">
    <property type="entry name" value="Class_I_gatase-like"/>
</dbReference>
<dbReference type="InterPro" id="IPR017926">
    <property type="entry name" value="GATASE"/>
</dbReference>
<dbReference type="InterPro" id="IPR001674">
    <property type="entry name" value="GMP_synth_C"/>
</dbReference>
<dbReference type="InterPro" id="IPR004739">
    <property type="entry name" value="GMP_synth_GATase"/>
</dbReference>
<dbReference type="InterPro" id="IPR022955">
    <property type="entry name" value="GMP_synthase"/>
</dbReference>
<dbReference type="InterPro" id="IPR025777">
    <property type="entry name" value="GMPS_ATP_PPase_dom"/>
</dbReference>
<dbReference type="InterPro" id="IPR022310">
    <property type="entry name" value="NAD/GMP_synthase"/>
</dbReference>
<dbReference type="InterPro" id="IPR014729">
    <property type="entry name" value="Rossmann-like_a/b/a_fold"/>
</dbReference>
<dbReference type="NCBIfam" id="TIGR00884">
    <property type="entry name" value="guaA_Cterm"/>
    <property type="match status" value="1"/>
</dbReference>
<dbReference type="NCBIfam" id="TIGR00888">
    <property type="entry name" value="guaA_Nterm"/>
    <property type="match status" value="1"/>
</dbReference>
<dbReference type="NCBIfam" id="NF000848">
    <property type="entry name" value="PRK00074.1"/>
    <property type="match status" value="1"/>
</dbReference>
<dbReference type="PANTHER" id="PTHR11922:SF2">
    <property type="entry name" value="GMP SYNTHASE [GLUTAMINE-HYDROLYZING]"/>
    <property type="match status" value="1"/>
</dbReference>
<dbReference type="PANTHER" id="PTHR11922">
    <property type="entry name" value="GMP SYNTHASE-RELATED"/>
    <property type="match status" value="1"/>
</dbReference>
<dbReference type="Pfam" id="PF00117">
    <property type="entry name" value="GATase"/>
    <property type="match status" value="1"/>
</dbReference>
<dbReference type="Pfam" id="PF00958">
    <property type="entry name" value="GMP_synt_C"/>
    <property type="match status" value="1"/>
</dbReference>
<dbReference type="Pfam" id="PF02540">
    <property type="entry name" value="NAD_synthase"/>
    <property type="match status" value="1"/>
</dbReference>
<dbReference type="PRINTS" id="PR00097">
    <property type="entry name" value="ANTSNTHASEII"/>
</dbReference>
<dbReference type="PRINTS" id="PR00099">
    <property type="entry name" value="CPSGATASE"/>
</dbReference>
<dbReference type="PRINTS" id="PR00096">
    <property type="entry name" value="GATASE"/>
</dbReference>
<dbReference type="SUPFAM" id="SSF52402">
    <property type="entry name" value="Adenine nucleotide alpha hydrolases-like"/>
    <property type="match status" value="1"/>
</dbReference>
<dbReference type="SUPFAM" id="SSF52317">
    <property type="entry name" value="Class I glutamine amidotransferase-like"/>
    <property type="match status" value="1"/>
</dbReference>
<dbReference type="SUPFAM" id="SSF54810">
    <property type="entry name" value="GMP synthetase C-terminal dimerisation domain"/>
    <property type="match status" value="1"/>
</dbReference>
<dbReference type="PROSITE" id="PS51273">
    <property type="entry name" value="GATASE_TYPE_1"/>
    <property type="match status" value="1"/>
</dbReference>
<dbReference type="PROSITE" id="PS51553">
    <property type="entry name" value="GMPS_ATP_PPASE"/>
    <property type="match status" value="1"/>
</dbReference>
<feature type="chain" id="PRO_0000229422" description="GMP synthase [glutamine-hydrolyzing]">
    <location>
        <begin position="1"/>
        <end position="533"/>
    </location>
</feature>
<feature type="domain" description="Glutamine amidotransferase type-1" evidence="1">
    <location>
        <begin position="25"/>
        <end position="215"/>
    </location>
</feature>
<feature type="domain" description="GMPS ATP-PPase" evidence="1">
    <location>
        <begin position="216"/>
        <end position="408"/>
    </location>
</feature>
<feature type="active site" description="Nucleophile" evidence="1">
    <location>
        <position position="102"/>
    </location>
</feature>
<feature type="active site" evidence="1">
    <location>
        <position position="189"/>
    </location>
</feature>
<feature type="active site" evidence="1">
    <location>
        <position position="191"/>
    </location>
</feature>
<feature type="binding site" evidence="1">
    <location>
        <begin position="243"/>
        <end position="249"/>
    </location>
    <ligand>
        <name>ATP</name>
        <dbReference type="ChEBI" id="CHEBI:30616"/>
    </ligand>
</feature>
<comment type="function">
    <text evidence="1">Catalyzes the synthesis of GMP from XMP.</text>
</comment>
<comment type="catalytic activity">
    <reaction evidence="1">
        <text>XMP + L-glutamine + ATP + H2O = GMP + L-glutamate + AMP + diphosphate + 2 H(+)</text>
        <dbReference type="Rhea" id="RHEA:11680"/>
        <dbReference type="ChEBI" id="CHEBI:15377"/>
        <dbReference type="ChEBI" id="CHEBI:15378"/>
        <dbReference type="ChEBI" id="CHEBI:29985"/>
        <dbReference type="ChEBI" id="CHEBI:30616"/>
        <dbReference type="ChEBI" id="CHEBI:33019"/>
        <dbReference type="ChEBI" id="CHEBI:57464"/>
        <dbReference type="ChEBI" id="CHEBI:58115"/>
        <dbReference type="ChEBI" id="CHEBI:58359"/>
        <dbReference type="ChEBI" id="CHEBI:456215"/>
        <dbReference type="EC" id="6.3.5.2"/>
    </reaction>
</comment>
<comment type="pathway">
    <text evidence="1">Purine metabolism; GMP biosynthesis; GMP from XMP (L-Gln route): step 1/1.</text>
</comment>
<comment type="subunit">
    <text evidence="1">Homodimer.</text>
</comment>
<reference key="1">
    <citation type="journal article" date="2005" name="Nat. Biotechnol.">
        <title>Genome sequence of the chlorinated compound-respiring bacterium Dehalococcoides species strain CBDB1.</title>
        <authorList>
            <person name="Kube M."/>
            <person name="Beck A."/>
            <person name="Zinder S.H."/>
            <person name="Kuhl H."/>
            <person name="Reinhardt R."/>
            <person name="Adrian L."/>
        </authorList>
    </citation>
    <scope>NUCLEOTIDE SEQUENCE [LARGE SCALE GENOMIC DNA]</scope>
    <source>
        <strain>CBDB1</strain>
    </source>
</reference>
<name>GUAA_DEHMC</name>
<accession>Q3ZXH7</accession>
<protein>
    <recommendedName>
        <fullName evidence="1">GMP synthase [glutamine-hydrolyzing]</fullName>
        <ecNumber evidence="1">6.3.5.2</ecNumber>
    </recommendedName>
    <alternativeName>
        <fullName evidence="1">GMP synthetase</fullName>
    </alternativeName>
    <alternativeName>
        <fullName evidence="1">Glutamine amidotransferase</fullName>
    </alternativeName>
</protein>
<sequence length="533" mass="59667">MEIAREKSGAKSECIDSGEETLRESIVIFDFGSQYSLLIARRIREMHVYCELVSHDTPWEKIAHLNPRGFILSGGPSSVYEPEAPLAPAYIFESKLPVLGICYGMQAITQQLGGVVEHSDKREYGHALLHSNVINTELLADMPEPSPVWMSHGDRIEKLPAGFKSLAYTENCPVAVMGNESDIYGLQFHPEVVHSPHGKIILKNFVFNICKCHANWTMGNYIQESIQNIREQVGDGQVICALSGGVDSAVVASLIHKAIGDQLTCIYVNNGLLRREEADRTLHVFKNHMGMKIIYVDAIDRFLESLGGITDPEQKRKVIGSEFIKVFEDEACKLGQIDFLAQGTLYPDVIESVSSVSKASAKIKSHHNVGGLPAHMKLKLIEPLRYLFKDEVRLLGKELGLPDEMIWRQPFPGPGLAIRIIGEVTREKLEILRSADWIVMSEIKKAKMYHQVWQSFAILTDVKSVGVMGDFRTYGYLVAIRAVTSEDAMTADWAKLPYDLLSIISNRIVNEVKEVNRVVYDISSKPPSTIEWE</sequence>
<proteinExistence type="inferred from homology"/>
<gene>
    <name evidence="1" type="primary">guaA</name>
    <name type="ordered locus">cbdbA817</name>
</gene>
<evidence type="ECO:0000255" key="1">
    <source>
        <dbReference type="HAMAP-Rule" id="MF_00344"/>
    </source>
</evidence>